<organism>
    <name type="scientific">Escherichia coli O157:H7</name>
    <dbReference type="NCBI Taxonomy" id="83334"/>
    <lineage>
        <taxon>Bacteria</taxon>
        <taxon>Pseudomonadati</taxon>
        <taxon>Pseudomonadota</taxon>
        <taxon>Gammaproteobacteria</taxon>
        <taxon>Enterobacterales</taxon>
        <taxon>Enterobacteriaceae</taxon>
        <taxon>Escherichia</taxon>
    </lineage>
</organism>
<reference key="1">
    <citation type="journal article" date="2001" name="Nature">
        <title>Genome sequence of enterohaemorrhagic Escherichia coli O157:H7.</title>
        <authorList>
            <person name="Perna N.T."/>
            <person name="Plunkett G. III"/>
            <person name="Burland V."/>
            <person name="Mau B."/>
            <person name="Glasner J.D."/>
            <person name="Rose D.J."/>
            <person name="Mayhew G.F."/>
            <person name="Evans P.S."/>
            <person name="Gregor J."/>
            <person name="Kirkpatrick H.A."/>
            <person name="Posfai G."/>
            <person name="Hackett J."/>
            <person name="Klink S."/>
            <person name="Boutin A."/>
            <person name="Shao Y."/>
            <person name="Miller L."/>
            <person name="Grotbeck E.J."/>
            <person name="Davis N.W."/>
            <person name="Lim A."/>
            <person name="Dimalanta E.T."/>
            <person name="Potamousis K."/>
            <person name="Apodaca J."/>
            <person name="Anantharaman T.S."/>
            <person name="Lin J."/>
            <person name="Yen G."/>
            <person name="Schwartz D.C."/>
            <person name="Welch R.A."/>
            <person name="Blattner F.R."/>
        </authorList>
    </citation>
    <scope>NUCLEOTIDE SEQUENCE [LARGE SCALE GENOMIC DNA]</scope>
    <source>
        <strain>O157:H7 / EDL933 / ATCC 700927 / EHEC</strain>
    </source>
</reference>
<reference key="2">
    <citation type="journal article" date="2001" name="DNA Res.">
        <title>Complete genome sequence of enterohemorrhagic Escherichia coli O157:H7 and genomic comparison with a laboratory strain K-12.</title>
        <authorList>
            <person name="Hayashi T."/>
            <person name="Makino K."/>
            <person name="Ohnishi M."/>
            <person name="Kurokawa K."/>
            <person name="Ishii K."/>
            <person name="Yokoyama K."/>
            <person name="Han C.-G."/>
            <person name="Ohtsubo E."/>
            <person name="Nakayama K."/>
            <person name="Murata T."/>
            <person name="Tanaka M."/>
            <person name="Tobe T."/>
            <person name="Iida T."/>
            <person name="Takami H."/>
            <person name="Honda T."/>
            <person name="Sasakawa C."/>
            <person name="Ogasawara N."/>
            <person name="Yasunaga T."/>
            <person name="Kuhara S."/>
            <person name="Shiba T."/>
            <person name="Hattori M."/>
            <person name="Shinagawa H."/>
        </authorList>
    </citation>
    <scope>NUCLEOTIDE SEQUENCE [LARGE SCALE GENOMIC DNA]</scope>
    <source>
        <strain>O157:H7 / Sakai / RIMD 0509952 / EHEC</strain>
    </source>
</reference>
<protein>
    <recommendedName>
        <fullName>Uncharacterized protein YheV</fullName>
    </recommendedName>
</protein>
<proteinExistence type="predicted"/>
<dbReference type="EMBL" id="AE005174">
    <property type="protein sequence ID" value="AAG58457.1"/>
    <property type="molecule type" value="Genomic_DNA"/>
</dbReference>
<dbReference type="EMBL" id="BA000007">
    <property type="status" value="NOT_ANNOTATED_CDS"/>
    <property type="molecule type" value="Genomic_DNA"/>
</dbReference>
<dbReference type="PIR" id="E85999">
    <property type="entry name" value="E85999"/>
</dbReference>
<dbReference type="RefSeq" id="WP_001007730.1">
    <property type="nucleotide sequence ID" value="NZ_VOAI01000004.1"/>
</dbReference>
<dbReference type="STRING" id="155864.Z4708"/>
<dbReference type="KEGG" id="ece:Z4708"/>
<dbReference type="PATRIC" id="fig|83334.175.peg.4290"/>
<dbReference type="eggNOG" id="COG3529">
    <property type="taxonomic scope" value="Bacteria"/>
</dbReference>
<dbReference type="OMA" id="WWIENNI"/>
<dbReference type="Proteomes" id="UP000000558">
    <property type="component" value="Chromosome"/>
</dbReference>
<dbReference type="Proteomes" id="UP000002519">
    <property type="component" value="Chromosome"/>
</dbReference>
<dbReference type="InterPro" id="IPR012658">
    <property type="entry name" value="YheV"/>
</dbReference>
<dbReference type="NCBIfam" id="TIGR02443">
    <property type="entry name" value="YheV family putative zinc ribbon protein"/>
    <property type="match status" value="1"/>
</dbReference>
<dbReference type="Pfam" id="PF09526">
    <property type="entry name" value="DUF2387"/>
    <property type="match status" value="1"/>
</dbReference>
<name>YHEV_ECO57</name>
<feature type="chain" id="PRO_0000169514" description="Uncharacterized protein YheV">
    <location>
        <begin position="1"/>
        <end position="66"/>
    </location>
</feature>
<gene>
    <name type="primary">yheV</name>
    <name type="ordered locus">Z4708</name>
    <name type="ordered locus">ECs4200.1</name>
</gene>
<accession>P0ADX0</accession>
<accession>P56622</accession>
<sequence length="66" mass="7599">MAIRKRFIAGAKCPACQAQDSMAMWRENNIDIVECVKCGHQMREADKEARDHVRKDEQVIGIFHPD</sequence>
<keyword id="KW-1185">Reference proteome</keyword>